<sequence>MAPSTVAVEMLSPKEKNRLRKPVVEKMRRDRINSSIEQLKLLLEQEFARHQPNSKLEKADILEMAVSYLKHSKAFAAAAGPKSLHQDYSEGYSWCLQEAVQFLTLHAASDTQMKLLYHFQRPPAPAAPVKETPTPGAAPQPARSSTKAAASVSTSRQSACGLWRPW</sequence>
<gene>
    <name type="primary">Hes5</name>
    <name type="synonym">Hes-5</name>
</gene>
<proteinExistence type="evidence at transcript level"/>
<protein>
    <recommendedName>
        <fullName>Transcription factor HES-5</fullName>
    </recommendedName>
    <alternativeName>
        <fullName>Hairy and enhancer of split 5</fullName>
    </alternativeName>
</protein>
<organism>
    <name type="scientific">Rattus norvegicus</name>
    <name type="common">Rat</name>
    <dbReference type="NCBI Taxonomy" id="10116"/>
    <lineage>
        <taxon>Eukaryota</taxon>
        <taxon>Metazoa</taxon>
        <taxon>Chordata</taxon>
        <taxon>Craniata</taxon>
        <taxon>Vertebrata</taxon>
        <taxon>Euteleostomi</taxon>
        <taxon>Mammalia</taxon>
        <taxon>Eutheria</taxon>
        <taxon>Euarchontoglires</taxon>
        <taxon>Glires</taxon>
        <taxon>Rodentia</taxon>
        <taxon>Myomorpha</taxon>
        <taxon>Muroidea</taxon>
        <taxon>Muridae</taxon>
        <taxon>Murinae</taxon>
        <taxon>Rattus</taxon>
    </lineage>
</organism>
<accession>Q03062</accession>
<keyword id="KW-0217">Developmental protein</keyword>
<keyword id="KW-0221">Differentiation</keyword>
<keyword id="KW-0238">DNA-binding</keyword>
<keyword id="KW-0524">Neurogenesis</keyword>
<keyword id="KW-0539">Nucleus</keyword>
<keyword id="KW-1185">Reference proteome</keyword>
<keyword id="KW-0678">Repressor</keyword>
<keyword id="KW-0804">Transcription</keyword>
<keyword id="KW-0805">Transcription regulation</keyword>
<name>HES5_RAT</name>
<evidence type="ECO:0000250" key="1"/>
<evidence type="ECO:0000255" key="2">
    <source>
        <dbReference type="PROSITE-ProRule" id="PRU00380"/>
    </source>
</evidence>
<evidence type="ECO:0000255" key="3">
    <source>
        <dbReference type="PROSITE-ProRule" id="PRU00981"/>
    </source>
</evidence>
<evidence type="ECO:0000256" key="4">
    <source>
        <dbReference type="SAM" id="MobiDB-lite"/>
    </source>
</evidence>
<evidence type="ECO:0000269" key="5">
    <source>
    </source>
</evidence>
<reference key="1">
    <citation type="journal article" date="1992" name="J. Biol. Chem.">
        <title>Molecular characterization of a rat negative regulator with a basic helix-loop-helix structure predominantly expressed in the developing nervous system.</title>
        <authorList>
            <person name="Akazawa C."/>
            <person name="Sasai Y."/>
            <person name="Nakanishi S."/>
            <person name="Kageyama R."/>
        </authorList>
    </citation>
    <scope>NUCLEOTIDE SEQUENCE [MRNA]</scope>
    <scope>TISSUE SPECIFICITY</scope>
    <source>
        <strain>Sprague-Dawley</strain>
        <tissue>Brain</tissue>
    </source>
</reference>
<dbReference type="EMBL" id="D12516">
    <property type="protein sequence ID" value="BAA02081.1"/>
    <property type="molecule type" value="mRNA"/>
</dbReference>
<dbReference type="PIR" id="A45119">
    <property type="entry name" value="A45119"/>
</dbReference>
<dbReference type="RefSeq" id="NP_077359.1">
    <property type="nucleotide sequence ID" value="NM_024383.1"/>
</dbReference>
<dbReference type="SMR" id="Q03062"/>
<dbReference type="ELM" id="Q03062"/>
<dbReference type="FunCoup" id="Q03062">
    <property type="interactions" value="98"/>
</dbReference>
<dbReference type="IntAct" id="Q03062">
    <property type="interactions" value="2"/>
</dbReference>
<dbReference type="MINT" id="Q03062"/>
<dbReference type="STRING" id="10116.ENSRNOP00000018769"/>
<dbReference type="GlyGen" id="Q03062">
    <property type="glycosylation" value="1 site"/>
</dbReference>
<dbReference type="PhosphoSitePlus" id="Q03062"/>
<dbReference type="PaxDb" id="10116-ENSRNOP00000018769"/>
<dbReference type="Ensembl" id="ENSRNOT00000018769.3">
    <property type="protein sequence ID" value="ENSRNOP00000018769.1"/>
    <property type="gene ID" value="ENSRNOG00000013850.3"/>
</dbReference>
<dbReference type="GeneID" id="79225"/>
<dbReference type="KEGG" id="rno:79225"/>
<dbReference type="AGR" id="RGD:621340"/>
<dbReference type="CTD" id="388585"/>
<dbReference type="RGD" id="621340">
    <property type="gene designation" value="Hes5"/>
</dbReference>
<dbReference type="eggNOG" id="ENOG502S6S1">
    <property type="taxonomic scope" value="Eukaryota"/>
</dbReference>
<dbReference type="GeneTree" id="ENSGT00940000162836"/>
<dbReference type="HOGENOM" id="CLU_068550_3_1_1"/>
<dbReference type="InParanoid" id="Q03062"/>
<dbReference type="OMA" id="MKLLCHF"/>
<dbReference type="OrthoDB" id="6085656at2759"/>
<dbReference type="PhylomeDB" id="Q03062"/>
<dbReference type="TreeFam" id="TF351373"/>
<dbReference type="PRO" id="PR:Q03062"/>
<dbReference type="Proteomes" id="UP000002494">
    <property type="component" value="Chromosome 5"/>
</dbReference>
<dbReference type="Bgee" id="ENSRNOG00000013850">
    <property type="expression patterns" value="Expressed in frontal cortex and 7 other cell types or tissues"/>
</dbReference>
<dbReference type="GO" id="GO:0005634">
    <property type="term" value="C:nucleus"/>
    <property type="evidence" value="ECO:0000318"/>
    <property type="project" value="GO_Central"/>
</dbReference>
<dbReference type="GO" id="GO:0003682">
    <property type="term" value="F:chromatin binding"/>
    <property type="evidence" value="ECO:0000314"/>
    <property type="project" value="MGI"/>
</dbReference>
<dbReference type="GO" id="GO:0001227">
    <property type="term" value="F:DNA-binding transcription repressor activity, RNA polymerase II-specific"/>
    <property type="evidence" value="ECO:0000250"/>
    <property type="project" value="UniProtKB"/>
</dbReference>
<dbReference type="GO" id="GO:0003690">
    <property type="term" value="F:double-stranded DNA binding"/>
    <property type="evidence" value="ECO:0000314"/>
    <property type="project" value="RGD"/>
</dbReference>
<dbReference type="GO" id="GO:0046983">
    <property type="term" value="F:protein dimerization activity"/>
    <property type="evidence" value="ECO:0007669"/>
    <property type="project" value="InterPro"/>
</dbReference>
<dbReference type="GO" id="GO:0000978">
    <property type="term" value="F:RNA polymerase II cis-regulatory region sequence-specific DNA binding"/>
    <property type="evidence" value="ECO:0000318"/>
    <property type="project" value="GO_Central"/>
</dbReference>
<dbReference type="GO" id="GO:1990837">
    <property type="term" value="F:sequence-specific double-stranded DNA binding"/>
    <property type="evidence" value="ECO:0000266"/>
    <property type="project" value="RGD"/>
</dbReference>
<dbReference type="GO" id="GO:0048708">
    <property type="term" value="P:astrocyte differentiation"/>
    <property type="evidence" value="ECO:0000250"/>
    <property type="project" value="UniProtKB"/>
</dbReference>
<dbReference type="GO" id="GO:0030509">
    <property type="term" value="P:BMP signaling pathway"/>
    <property type="evidence" value="ECO:0000266"/>
    <property type="project" value="RGD"/>
</dbReference>
<dbReference type="GO" id="GO:0007420">
    <property type="term" value="P:brain development"/>
    <property type="evidence" value="ECO:0000250"/>
    <property type="project" value="UniProtKB"/>
</dbReference>
<dbReference type="GO" id="GO:0043010">
    <property type="term" value="P:camera-type eye development"/>
    <property type="evidence" value="ECO:0000250"/>
    <property type="project" value="UniProtKB"/>
</dbReference>
<dbReference type="GO" id="GO:0051216">
    <property type="term" value="P:cartilage development"/>
    <property type="evidence" value="ECO:0000250"/>
    <property type="project" value="UniProtKB"/>
</dbReference>
<dbReference type="GO" id="GO:0007155">
    <property type="term" value="P:cell adhesion"/>
    <property type="evidence" value="ECO:0000250"/>
    <property type="project" value="UniProtKB"/>
</dbReference>
<dbReference type="GO" id="GO:0048469">
    <property type="term" value="P:cell maturation"/>
    <property type="evidence" value="ECO:0000250"/>
    <property type="project" value="UniProtKB"/>
</dbReference>
<dbReference type="GO" id="GO:0022010">
    <property type="term" value="P:central nervous system myelination"/>
    <property type="evidence" value="ECO:0000250"/>
    <property type="project" value="UniProtKB"/>
</dbReference>
<dbReference type="GO" id="GO:0072049">
    <property type="term" value="P:comma-shaped body morphogenesis"/>
    <property type="evidence" value="ECO:0000266"/>
    <property type="project" value="RGD"/>
</dbReference>
<dbReference type="GO" id="GO:0090162">
    <property type="term" value="P:establishment of epithelial cell polarity"/>
    <property type="evidence" value="ECO:0000266"/>
    <property type="project" value="RGD"/>
</dbReference>
<dbReference type="GO" id="GO:0021861">
    <property type="term" value="P:forebrain radial glial cell differentiation"/>
    <property type="evidence" value="ECO:0000314"/>
    <property type="project" value="UniProtKB"/>
</dbReference>
<dbReference type="GO" id="GO:0021781">
    <property type="term" value="P:glial cell fate commitment"/>
    <property type="evidence" value="ECO:0000250"/>
    <property type="project" value="UniProtKB"/>
</dbReference>
<dbReference type="GO" id="GO:0042491">
    <property type="term" value="P:inner ear auditory receptor cell differentiation"/>
    <property type="evidence" value="ECO:0000266"/>
    <property type="project" value="RGD"/>
</dbReference>
<dbReference type="GO" id="GO:0060122">
    <property type="term" value="P:inner ear receptor cell stereocilium organization"/>
    <property type="evidence" value="ECO:0000266"/>
    <property type="project" value="RGD"/>
</dbReference>
<dbReference type="GO" id="GO:0072282">
    <property type="term" value="P:metanephric nephron tubule morphogenesis"/>
    <property type="evidence" value="ECO:0000266"/>
    <property type="project" value="RGD"/>
</dbReference>
<dbReference type="GO" id="GO:0048712">
    <property type="term" value="P:negative regulation of astrocyte differentiation"/>
    <property type="evidence" value="ECO:0000250"/>
    <property type="project" value="UniProtKB"/>
</dbReference>
<dbReference type="GO" id="GO:0045892">
    <property type="term" value="P:negative regulation of DNA-templated transcription"/>
    <property type="evidence" value="ECO:0000314"/>
    <property type="project" value="RGD"/>
</dbReference>
<dbReference type="GO" id="GO:2000978">
    <property type="term" value="P:negative regulation of forebrain neuron differentiation"/>
    <property type="evidence" value="ECO:0000314"/>
    <property type="project" value="UniProtKB"/>
</dbReference>
<dbReference type="GO" id="GO:0045608">
    <property type="term" value="P:negative regulation of inner ear auditory receptor cell differentiation"/>
    <property type="evidence" value="ECO:0000266"/>
    <property type="project" value="RGD"/>
</dbReference>
<dbReference type="GO" id="GO:2000981">
    <property type="term" value="P:negative regulation of inner ear receptor cell differentiation"/>
    <property type="evidence" value="ECO:0000266"/>
    <property type="project" value="RGD"/>
</dbReference>
<dbReference type="GO" id="GO:0045665">
    <property type="term" value="P:negative regulation of neuron differentiation"/>
    <property type="evidence" value="ECO:0000250"/>
    <property type="project" value="UniProtKB"/>
</dbReference>
<dbReference type="GO" id="GO:0048715">
    <property type="term" value="P:negative regulation of oligodendrocyte differentiation"/>
    <property type="evidence" value="ECO:0000250"/>
    <property type="project" value="UniProtKB"/>
</dbReference>
<dbReference type="GO" id="GO:2000974">
    <property type="term" value="P:negative regulation of pro-B cell differentiation"/>
    <property type="evidence" value="ECO:0000315"/>
    <property type="project" value="UniProtKB"/>
</dbReference>
<dbReference type="GO" id="GO:2000737">
    <property type="term" value="P:negative regulation of stem cell differentiation"/>
    <property type="evidence" value="ECO:0000250"/>
    <property type="project" value="UniProtKB"/>
</dbReference>
<dbReference type="GO" id="GO:0000122">
    <property type="term" value="P:negative regulation of transcription by RNA polymerase II"/>
    <property type="evidence" value="ECO:0000314"/>
    <property type="project" value="UniProtKB"/>
</dbReference>
<dbReference type="GO" id="GO:0021915">
    <property type="term" value="P:neural tube development"/>
    <property type="evidence" value="ECO:0000250"/>
    <property type="project" value="UniProtKB"/>
</dbReference>
<dbReference type="GO" id="GO:0030182">
    <property type="term" value="P:neuron differentiation"/>
    <property type="evidence" value="ECO:0000270"/>
    <property type="project" value="RGD"/>
</dbReference>
<dbReference type="GO" id="GO:0097150">
    <property type="term" value="P:neuronal stem cell population maintenance"/>
    <property type="evidence" value="ECO:0000314"/>
    <property type="project" value="UniProtKB"/>
</dbReference>
<dbReference type="GO" id="GO:0007219">
    <property type="term" value="P:Notch signaling pathway"/>
    <property type="evidence" value="ECO:0000250"/>
    <property type="project" value="UniProtKB"/>
</dbReference>
<dbReference type="GO" id="GO:0014003">
    <property type="term" value="P:oligodendrocyte development"/>
    <property type="evidence" value="ECO:0000250"/>
    <property type="project" value="UniProtKB"/>
</dbReference>
<dbReference type="GO" id="GO:0048709">
    <property type="term" value="P:oligodendrocyte differentiation"/>
    <property type="evidence" value="ECO:0000266"/>
    <property type="project" value="RGD"/>
</dbReference>
<dbReference type="GO" id="GO:0030513">
    <property type="term" value="P:positive regulation of BMP signaling pathway"/>
    <property type="evidence" value="ECO:0000250"/>
    <property type="project" value="UniProtKB"/>
</dbReference>
<dbReference type="GO" id="GO:0008284">
    <property type="term" value="P:positive regulation of cell population proliferation"/>
    <property type="evidence" value="ECO:0000250"/>
    <property type="project" value="UniProtKB"/>
</dbReference>
<dbReference type="GO" id="GO:0045893">
    <property type="term" value="P:positive regulation of DNA-templated transcription"/>
    <property type="evidence" value="ECO:0000250"/>
    <property type="project" value="UniProtKB"/>
</dbReference>
<dbReference type="GO" id="GO:0045747">
    <property type="term" value="P:positive regulation of Notch signaling pathway"/>
    <property type="evidence" value="ECO:0000266"/>
    <property type="project" value="RGD"/>
</dbReference>
<dbReference type="GO" id="GO:0046427">
    <property type="term" value="P:positive regulation of receptor signaling pathway via JAK-STAT"/>
    <property type="evidence" value="ECO:0000250"/>
    <property type="project" value="UniProtKB"/>
</dbReference>
<dbReference type="GO" id="GO:0048661">
    <property type="term" value="P:positive regulation of smooth muscle cell proliferation"/>
    <property type="evidence" value="ECO:0000250"/>
    <property type="project" value="UniProtKB"/>
</dbReference>
<dbReference type="GO" id="GO:0045944">
    <property type="term" value="P:positive regulation of transcription by RNA polymerase II"/>
    <property type="evidence" value="ECO:0000266"/>
    <property type="project" value="RGD"/>
</dbReference>
<dbReference type="GO" id="GO:0065003">
    <property type="term" value="P:protein-containing complex assembly"/>
    <property type="evidence" value="ECO:0000250"/>
    <property type="project" value="UniProtKB"/>
</dbReference>
<dbReference type="GO" id="GO:0045595">
    <property type="term" value="P:regulation of cell differentiation"/>
    <property type="evidence" value="ECO:0000250"/>
    <property type="project" value="UniProtKB"/>
</dbReference>
<dbReference type="GO" id="GO:0050678">
    <property type="term" value="P:regulation of epithelial cell proliferation"/>
    <property type="evidence" value="ECO:0000266"/>
    <property type="project" value="RGD"/>
</dbReference>
<dbReference type="GO" id="GO:0031641">
    <property type="term" value="P:regulation of myelination"/>
    <property type="evidence" value="ECO:0000250"/>
    <property type="project" value="UniProtKB"/>
</dbReference>
<dbReference type="GO" id="GO:0050767">
    <property type="term" value="P:regulation of neurogenesis"/>
    <property type="evidence" value="ECO:0000250"/>
    <property type="project" value="UniProtKB"/>
</dbReference>
<dbReference type="GO" id="GO:0045664">
    <property type="term" value="P:regulation of neuron differentiation"/>
    <property type="evidence" value="ECO:0000266"/>
    <property type="project" value="RGD"/>
</dbReference>
<dbReference type="GO" id="GO:0072050">
    <property type="term" value="P:S-shaped body morphogenesis"/>
    <property type="evidence" value="ECO:0000266"/>
    <property type="project" value="RGD"/>
</dbReference>
<dbReference type="GO" id="GO:0007224">
    <property type="term" value="P:smoothened signaling pathway"/>
    <property type="evidence" value="ECO:0000250"/>
    <property type="project" value="UniProtKB"/>
</dbReference>
<dbReference type="GO" id="GO:0072086">
    <property type="term" value="P:specification of loop of Henle identity"/>
    <property type="evidence" value="ECO:0000266"/>
    <property type="project" value="RGD"/>
</dbReference>
<dbReference type="GO" id="GO:0021537">
    <property type="term" value="P:telencephalon development"/>
    <property type="evidence" value="ECO:0000250"/>
    <property type="project" value="UniProtKB"/>
</dbReference>
<dbReference type="CDD" id="cd11461">
    <property type="entry name" value="bHLH-O_HES5"/>
    <property type="match status" value="1"/>
</dbReference>
<dbReference type="FunFam" id="4.10.280.10:FF:000033">
    <property type="entry name" value="Transcription factor HES-5"/>
    <property type="match status" value="1"/>
</dbReference>
<dbReference type="Gene3D" id="4.10.280.10">
    <property type="entry name" value="Helix-loop-helix DNA-binding domain"/>
    <property type="match status" value="1"/>
</dbReference>
<dbReference type="InterPro" id="IPR011598">
    <property type="entry name" value="bHLH_dom"/>
</dbReference>
<dbReference type="InterPro" id="IPR050370">
    <property type="entry name" value="HES_HEY"/>
</dbReference>
<dbReference type="InterPro" id="IPR036638">
    <property type="entry name" value="HLH_DNA-bd_sf"/>
</dbReference>
<dbReference type="InterPro" id="IPR003650">
    <property type="entry name" value="Orange_dom"/>
</dbReference>
<dbReference type="PANTHER" id="PTHR10985">
    <property type="entry name" value="BASIC HELIX-LOOP-HELIX TRANSCRIPTION FACTOR, HES-RELATED"/>
    <property type="match status" value="1"/>
</dbReference>
<dbReference type="Pfam" id="PF07527">
    <property type="entry name" value="Hairy_orange"/>
    <property type="match status" value="1"/>
</dbReference>
<dbReference type="Pfam" id="PF00010">
    <property type="entry name" value="HLH"/>
    <property type="match status" value="1"/>
</dbReference>
<dbReference type="SMART" id="SM00353">
    <property type="entry name" value="HLH"/>
    <property type="match status" value="1"/>
</dbReference>
<dbReference type="SMART" id="SM00511">
    <property type="entry name" value="ORANGE"/>
    <property type="match status" value="1"/>
</dbReference>
<dbReference type="SUPFAM" id="SSF47459">
    <property type="entry name" value="HLH, helix-loop-helix DNA-binding domain"/>
    <property type="match status" value="1"/>
</dbReference>
<dbReference type="PROSITE" id="PS50888">
    <property type="entry name" value="BHLH"/>
    <property type="match status" value="1"/>
</dbReference>
<dbReference type="PROSITE" id="PS51054">
    <property type="entry name" value="ORANGE"/>
    <property type="match status" value="1"/>
</dbReference>
<feature type="chain" id="PRO_0000127213" description="Transcription factor HES-5">
    <location>
        <begin position="1"/>
        <end position="166"/>
    </location>
</feature>
<feature type="domain" description="bHLH" evidence="3">
    <location>
        <begin position="16"/>
        <end position="72"/>
    </location>
</feature>
<feature type="domain" description="Orange" evidence="2">
    <location>
        <begin position="88"/>
        <end position="119"/>
    </location>
</feature>
<feature type="region of interest" description="Disordered" evidence="4">
    <location>
        <begin position="125"/>
        <end position="166"/>
    </location>
</feature>
<feature type="short sequence motif" description="WRPW motif">
    <location>
        <begin position="163"/>
        <end position="166"/>
    </location>
</feature>
<feature type="compositionally biased region" description="Low complexity" evidence="4">
    <location>
        <begin position="142"/>
        <end position="156"/>
    </location>
</feature>
<comment type="function">
    <text evidence="1">Transcriptional repressor of genes that require a bHLH protein for their transcription. Plays an important role as neurogenesis negative regulator (By similarity).</text>
</comment>
<comment type="subunit">
    <text evidence="1">Transcription repression requires formation of a complex with a corepressor protein of the Groucho/TLE family.</text>
</comment>
<comment type="subcellular location">
    <subcellularLocation>
        <location>Nucleus</location>
    </subcellularLocation>
</comment>
<comment type="tissue specificity">
    <text evidence="5">Expressed predominantly in embryonic neural lineage cells.</text>
</comment>
<comment type="domain">
    <text>Has a particular type of basic domain (presence of a helix-interrupting proline) that binds to the N-box (CACNAG), rather than the canonical E-box (CANNTG).</text>
</comment>
<comment type="domain">
    <text evidence="1">The C-terminal WRPW motif is a transcriptional repression domain necessary for the interaction with Groucho/TLE family members, transcriptional corepressors recruited to specific target DNA by Hairy-related proteins.</text>
</comment>